<sequence length="513" mass="56495">MIQIKRALVSVSDKTGITEICSFLTKHGVEILSTGGTYDALSKAGIAVKKVDEFTGFPEILHGRVKTLHPKIHGGLLGDTTNPDHVKQMESNGIVPITLVIVNLYPFVKTVMKPDVTLEDAIENIDIGGPSMLRSAAKNHKNVVVLTDPKDYESFQNEFTTNNGKISRETAFGYAAKVFSETASYDSAISSYFNKRLGIKYPDKITFAFNKKQKLRYGENPHQDAAFYEPLFLKSQFEALQGKELSFNNMLDFDAAFHVASLLPKNAVSIVKHLNPCGIAFGETVLESFELARKTDPISAFGGIIGIHGRVEKESAEEITKNFVEGVIAESFSNEALEIFAKKPNIRLIPIAKFDEALDELDLRSLHHGLLIQNRDYDLITKDKLKIVSKKQPTEDDLEGLMFAWNCVKFIKSNAIVYTDQNSTLGIGAGQMSRVDSVELGAMKAQKVGLSVVGSYVGSDAFFPFRDGIDAIAKVGAKAIIQPGGSIRDEEVIQAADEHGLIMVFTGMRHFRH</sequence>
<reference key="1">
    <citation type="journal article" date="2008" name="PLoS ONE">
        <title>Genome sequence of the saprophyte Leptospira biflexa provides insights into the evolution of Leptospira and the pathogenesis of leptospirosis.</title>
        <authorList>
            <person name="Picardeau M."/>
            <person name="Bulach D.M."/>
            <person name="Bouchier C."/>
            <person name="Zuerner R.L."/>
            <person name="Zidane N."/>
            <person name="Wilson P.J."/>
            <person name="Creno S."/>
            <person name="Kuczek E.S."/>
            <person name="Bommezzadri S."/>
            <person name="Davis J.C."/>
            <person name="McGrath A."/>
            <person name="Johnson M.J."/>
            <person name="Boursaux-Eude C."/>
            <person name="Seemann T."/>
            <person name="Rouy Z."/>
            <person name="Coppel R.L."/>
            <person name="Rood J.I."/>
            <person name="Lajus A."/>
            <person name="Davies J.K."/>
            <person name="Medigue C."/>
            <person name="Adler B."/>
        </authorList>
    </citation>
    <scope>NUCLEOTIDE SEQUENCE [LARGE SCALE GENOMIC DNA]</scope>
    <source>
        <strain>Patoc 1 / Ames</strain>
    </source>
</reference>
<accession>B0SGW3</accession>
<protein>
    <recommendedName>
        <fullName evidence="1">Bifunctional purine biosynthesis protein PurH</fullName>
    </recommendedName>
    <domain>
        <recommendedName>
            <fullName evidence="1">Phosphoribosylaminoimidazolecarboxamide formyltransferase</fullName>
            <ecNumber evidence="1">2.1.2.3</ecNumber>
        </recommendedName>
        <alternativeName>
            <fullName evidence="1">AICAR transformylase</fullName>
        </alternativeName>
    </domain>
    <domain>
        <recommendedName>
            <fullName evidence="1">IMP cyclohydrolase</fullName>
            <ecNumber evidence="1">3.5.4.10</ecNumber>
        </recommendedName>
        <alternativeName>
            <fullName evidence="1">ATIC</fullName>
        </alternativeName>
        <alternativeName>
            <fullName evidence="1">IMP synthase</fullName>
        </alternativeName>
        <alternativeName>
            <fullName evidence="1">Inosinicase</fullName>
        </alternativeName>
    </domain>
</protein>
<dbReference type="EC" id="2.1.2.3" evidence="1"/>
<dbReference type="EC" id="3.5.4.10" evidence="1"/>
<dbReference type="EMBL" id="CP000777">
    <property type="protein sequence ID" value="ABZ93930.1"/>
    <property type="molecule type" value="Genomic_DNA"/>
</dbReference>
<dbReference type="RefSeq" id="WP_012388455.1">
    <property type="nucleotide sequence ID" value="NC_010842.1"/>
</dbReference>
<dbReference type="SMR" id="B0SGW3"/>
<dbReference type="KEGG" id="lbf:LBF_1416"/>
<dbReference type="HOGENOM" id="CLU_016316_5_2_12"/>
<dbReference type="UniPathway" id="UPA00074">
    <property type="reaction ID" value="UER00133"/>
</dbReference>
<dbReference type="UniPathway" id="UPA00074">
    <property type="reaction ID" value="UER00135"/>
</dbReference>
<dbReference type="GO" id="GO:0005829">
    <property type="term" value="C:cytosol"/>
    <property type="evidence" value="ECO:0007669"/>
    <property type="project" value="TreeGrafter"/>
</dbReference>
<dbReference type="GO" id="GO:0003937">
    <property type="term" value="F:IMP cyclohydrolase activity"/>
    <property type="evidence" value="ECO:0007669"/>
    <property type="project" value="UniProtKB-UniRule"/>
</dbReference>
<dbReference type="GO" id="GO:0004643">
    <property type="term" value="F:phosphoribosylaminoimidazolecarboxamide formyltransferase activity"/>
    <property type="evidence" value="ECO:0007669"/>
    <property type="project" value="UniProtKB-UniRule"/>
</dbReference>
<dbReference type="GO" id="GO:0006189">
    <property type="term" value="P:'de novo' IMP biosynthetic process"/>
    <property type="evidence" value="ECO:0007669"/>
    <property type="project" value="UniProtKB-UniRule"/>
</dbReference>
<dbReference type="CDD" id="cd01421">
    <property type="entry name" value="IMPCH"/>
    <property type="match status" value="1"/>
</dbReference>
<dbReference type="FunFam" id="3.40.140.20:FF:000001">
    <property type="entry name" value="Bifunctional purine biosynthesis protein PurH"/>
    <property type="match status" value="1"/>
</dbReference>
<dbReference type="FunFam" id="3.40.50.1380:FF:000001">
    <property type="entry name" value="Bifunctional purine biosynthesis protein PurH"/>
    <property type="match status" value="1"/>
</dbReference>
<dbReference type="Gene3D" id="3.40.140.20">
    <property type="match status" value="2"/>
</dbReference>
<dbReference type="Gene3D" id="3.40.50.1380">
    <property type="entry name" value="Methylglyoxal synthase-like domain"/>
    <property type="match status" value="1"/>
</dbReference>
<dbReference type="HAMAP" id="MF_00139">
    <property type="entry name" value="PurH"/>
    <property type="match status" value="1"/>
</dbReference>
<dbReference type="InterPro" id="IPR024051">
    <property type="entry name" value="AICAR_Tfase_dup_dom_sf"/>
</dbReference>
<dbReference type="InterPro" id="IPR016193">
    <property type="entry name" value="Cytidine_deaminase-like"/>
</dbReference>
<dbReference type="InterPro" id="IPR011607">
    <property type="entry name" value="MGS-like_dom"/>
</dbReference>
<dbReference type="InterPro" id="IPR036914">
    <property type="entry name" value="MGS-like_dom_sf"/>
</dbReference>
<dbReference type="InterPro" id="IPR002695">
    <property type="entry name" value="PurH-like"/>
</dbReference>
<dbReference type="NCBIfam" id="NF002049">
    <property type="entry name" value="PRK00881.1"/>
    <property type="match status" value="1"/>
</dbReference>
<dbReference type="NCBIfam" id="TIGR00355">
    <property type="entry name" value="purH"/>
    <property type="match status" value="1"/>
</dbReference>
<dbReference type="PANTHER" id="PTHR11692:SF0">
    <property type="entry name" value="BIFUNCTIONAL PURINE BIOSYNTHESIS PROTEIN ATIC"/>
    <property type="match status" value="1"/>
</dbReference>
<dbReference type="PANTHER" id="PTHR11692">
    <property type="entry name" value="BIFUNCTIONAL PURINE BIOSYNTHESIS PROTEIN PURH"/>
    <property type="match status" value="1"/>
</dbReference>
<dbReference type="Pfam" id="PF01808">
    <property type="entry name" value="AICARFT_IMPCHas"/>
    <property type="match status" value="1"/>
</dbReference>
<dbReference type="Pfam" id="PF02142">
    <property type="entry name" value="MGS"/>
    <property type="match status" value="1"/>
</dbReference>
<dbReference type="PIRSF" id="PIRSF000414">
    <property type="entry name" value="AICARFT_IMPCHas"/>
    <property type="match status" value="1"/>
</dbReference>
<dbReference type="SMART" id="SM00798">
    <property type="entry name" value="AICARFT_IMPCHas"/>
    <property type="match status" value="1"/>
</dbReference>
<dbReference type="SMART" id="SM00851">
    <property type="entry name" value="MGS"/>
    <property type="match status" value="1"/>
</dbReference>
<dbReference type="SUPFAM" id="SSF53927">
    <property type="entry name" value="Cytidine deaminase-like"/>
    <property type="match status" value="1"/>
</dbReference>
<dbReference type="SUPFAM" id="SSF52335">
    <property type="entry name" value="Methylglyoxal synthase-like"/>
    <property type="match status" value="1"/>
</dbReference>
<dbReference type="PROSITE" id="PS51855">
    <property type="entry name" value="MGS"/>
    <property type="match status" value="1"/>
</dbReference>
<organism>
    <name type="scientific">Leptospira biflexa serovar Patoc (strain Patoc 1 / Ames)</name>
    <dbReference type="NCBI Taxonomy" id="355278"/>
    <lineage>
        <taxon>Bacteria</taxon>
        <taxon>Pseudomonadati</taxon>
        <taxon>Spirochaetota</taxon>
        <taxon>Spirochaetia</taxon>
        <taxon>Leptospirales</taxon>
        <taxon>Leptospiraceae</taxon>
        <taxon>Leptospira</taxon>
    </lineage>
</organism>
<proteinExistence type="inferred from homology"/>
<comment type="catalytic activity">
    <reaction evidence="1">
        <text>(6R)-10-formyltetrahydrofolate + 5-amino-1-(5-phospho-beta-D-ribosyl)imidazole-4-carboxamide = 5-formamido-1-(5-phospho-D-ribosyl)imidazole-4-carboxamide + (6S)-5,6,7,8-tetrahydrofolate</text>
        <dbReference type="Rhea" id="RHEA:22192"/>
        <dbReference type="ChEBI" id="CHEBI:57453"/>
        <dbReference type="ChEBI" id="CHEBI:58467"/>
        <dbReference type="ChEBI" id="CHEBI:58475"/>
        <dbReference type="ChEBI" id="CHEBI:195366"/>
        <dbReference type="EC" id="2.1.2.3"/>
    </reaction>
</comment>
<comment type="catalytic activity">
    <reaction evidence="1">
        <text>IMP + H2O = 5-formamido-1-(5-phospho-D-ribosyl)imidazole-4-carboxamide</text>
        <dbReference type="Rhea" id="RHEA:18445"/>
        <dbReference type="ChEBI" id="CHEBI:15377"/>
        <dbReference type="ChEBI" id="CHEBI:58053"/>
        <dbReference type="ChEBI" id="CHEBI:58467"/>
        <dbReference type="EC" id="3.5.4.10"/>
    </reaction>
</comment>
<comment type="pathway">
    <text evidence="1">Purine metabolism; IMP biosynthesis via de novo pathway; 5-formamido-1-(5-phospho-D-ribosyl)imidazole-4-carboxamide from 5-amino-1-(5-phospho-D-ribosyl)imidazole-4-carboxamide (10-formyl THF route): step 1/1.</text>
</comment>
<comment type="pathway">
    <text evidence="1">Purine metabolism; IMP biosynthesis via de novo pathway; IMP from 5-formamido-1-(5-phospho-D-ribosyl)imidazole-4-carboxamide: step 1/1.</text>
</comment>
<comment type="domain">
    <text evidence="1">The IMP cyclohydrolase activity resides in the N-terminal region.</text>
</comment>
<comment type="similarity">
    <text evidence="1">Belongs to the PurH family.</text>
</comment>
<feature type="chain" id="PRO_1000096070" description="Bifunctional purine biosynthesis protein PurH">
    <location>
        <begin position="1"/>
        <end position="513"/>
    </location>
</feature>
<feature type="domain" description="MGS-like" evidence="2">
    <location>
        <begin position="1"/>
        <end position="147"/>
    </location>
</feature>
<evidence type="ECO:0000255" key="1">
    <source>
        <dbReference type="HAMAP-Rule" id="MF_00139"/>
    </source>
</evidence>
<evidence type="ECO:0000255" key="2">
    <source>
        <dbReference type="PROSITE-ProRule" id="PRU01202"/>
    </source>
</evidence>
<gene>
    <name evidence="1" type="primary">purH</name>
    <name type="ordered locus">LBF_1416</name>
</gene>
<keyword id="KW-0378">Hydrolase</keyword>
<keyword id="KW-0511">Multifunctional enzyme</keyword>
<keyword id="KW-0658">Purine biosynthesis</keyword>
<keyword id="KW-0808">Transferase</keyword>
<name>PUR9_LEPBA</name>